<gene>
    <name evidence="1" type="primary">hisB</name>
    <name type="ordered locus">M1425_1537</name>
</gene>
<dbReference type="EC" id="4.2.1.19" evidence="1"/>
<dbReference type="EMBL" id="CP001400">
    <property type="protein sequence ID" value="ACP38286.1"/>
    <property type="molecule type" value="Genomic_DNA"/>
</dbReference>
<dbReference type="SMR" id="C3MW64"/>
<dbReference type="KEGG" id="sia:M1425_1537"/>
<dbReference type="HOGENOM" id="CLU_044308_3_0_2"/>
<dbReference type="UniPathway" id="UPA00031">
    <property type="reaction ID" value="UER00011"/>
</dbReference>
<dbReference type="Proteomes" id="UP000001350">
    <property type="component" value="Chromosome"/>
</dbReference>
<dbReference type="GO" id="GO:0005737">
    <property type="term" value="C:cytoplasm"/>
    <property type="evidence" value="ECO:0007669"/>
    <property type="project" value="UniProtKB-SubCell"/>
</dbReference>
<dbReference type="GO" id="GO:0004424">
    <property type="term" value="F:imidazoleglycerol-phosphate dehydratase activity"/>
    <property type="evidence" value="ECO:0007669"/>
    <property type="project" value="UniProtKB-UniRule"/>
</dbReference>
<dbReference type="GO" id="GO:0000105">
    <property type="term" value="P:L-histidine biosynthetic process"/>
    <property type="evidence" value="ECO:0007669"/>
    <property type="project" value="UniProtKB-UniRule"/>
</dbReference>
<dbReference type="CDD" id="cd07914">
    <property type="entry name" value="IGPD"/>
    <property type="match status" value="1"/>
</dbReference>
<dbReference type="FunFam" id="3.30.230.40:FF:000001">
    <property type="entry name" value="Imidazoleglycerol-phosphate dehydratase HisB"/>
    <property type="match status" value="1"/>
</dbReference>
<dbReference type="FunFam" id="3.30.230.40:FF:000003">
    <property type="entry name" value="Imidazoleglycerol-phosphate dehydratase HisB"/>
    <property type="match status" value="1"/>
</dbReference>
<dbReference type="Gene3D" id="3.30.230.40">
    <property type="entry name" value="Imidazole glycerol phosphate dehydratase, domain 1"/>
    <property type="match status" value="2"/>
</dbReference>
<dbReference type="HAMAP" id="MF_00076">
    <property type="entry name" value="HisB"/>
    <property type="match status" value="1"/>
</dbReference>
<dbReference type="InterPro" id="IPR038494">
    <property type="entry name" value="IGPD_sf"/>
</dbReference>
<dbReference type="InterPro" id="IPR000807">
    <property type="entry name" value="ImidazoleglycerolP_deHydtase"/>
</dbReference>
<dbReference type="InterPro" id="IPR020565">
    <property type="entry name" value="ImidazoleglycerP_deHydtase_CS"/>
</dbReference>
<dbReference type="InterPro" id="IPR020568">
    <property type="entry name" value="Ribosomal_Su5_D2-typ_SF"/>
</dbReference>
<dbReference type="NCBIfam" id="NF002114">
    <property type="entry name" value="PRK00951.2-4"/>
    <property type="match status" value="1"/>
</dbReference>
<dbReference type="NCBIfam" id="NF010121">
    <property type="entry name" value="PRK13598.1"/>
    <property type="match status" value="1"/>
</dbReference>
<dbReference type="PANTHER" id="PTHR23133:SF2">
    <property type="entry name" value="IMIDAZOLEGLYCEROL-PHOSPHATE DEHYDRATASE"/>
    <property type="match status" value="1"/>
</dbReference>
<dbReference type="PANTHER" id="PTHR23133">
    <property type="entry name" value="IMIDAZOLEGLYCEROL-PHOSPHATE DEHYDRATASE HIS7"/>
    <property type="match status" value="1"/>
</dbReference>
<dbReference type="Pfam" id="PF00475">
    <property type="entry name" value="IGPD"/>
    <property type="match status" value="1"/>
</dbReference>
<dbReference type="SUPFAM" id="SSF54211">
    <property type="entry name" value="Ribosomal protein S5 domain 2-like"/>
    <property type="match status" value="2"/>
</dbReference>
<dbReference type="PROSITE" id="PS00954">
    <property type="entry name" value="IGP_DEHYDRATASE_1"/>
    <property type="match status" value="1"/>
</dbReference>
<dbReference type="PROSITE" id="PS00955">
    <property type="entry name" value="IGP_DEHYDRATASE_2"/>
    <property type="match status" value="1"/>
</dbReference>
<sequence length="193" mass="21494">MARNANITRETKETKIEVFLDIDRKGEIKVSTPVPFFNHMLITLLTYMNSTATVSATDKLPYDDHHIIEDVAITLGLAIKEALGDKRGIKRFSHQIIPMDEALVLVSLDISNRGIAFVNLNLKRSEIGGLATENIPHFFQSFAYNSGVTLHISQLSGYNTHHIIEASFKALGLALYEATRIVDNEIRSTKGVI</sequence>
<comment type="catalytic activity">
    <reaction evidence="1">
        <text>D-erythro-1-(imidazol-4-yl)glycerol 3-phosphate = 3-(imidazol-4-yl)-2-oxopropyl phosphate + H2O</text>
        <dbReference type="Rhea" id="RHEA:11040"/>
        <dbReference type="ChEBI" id="CHEBI:15377"/>
        <dbReference type="ChEBI" id="CHEBI:57766"/>
        <dbReference type="ChEBI" id="CHEBI:58278"/>
        <dbReference type="EC" id="4.2.1.19"/>
    </reaction>
</comment>
<comment type="pathway">
    <text evidence="1">Amino-acid biosynthesis; L-histidine biosynthesis; L-histidine from 5-phospho-alpha-D-ribose 1-diphosphate: step 6/9.</text>
</comment>
<comment type="subcellular location">
    <subcellularLocation>
        <location evidence="1">Cytoplasm</location>
    </subcellularLocation>
</comment>
<comment type="similarity">
    <text evidence="1">Belongs to the imidazoleglycerol-phosphate dehydratase family.</text>
</comment>
<name>HIS7_SACI4</name>
<organism>
    <name type="scientific">Saccharolobus islandicus (strain M.14.25 / Kamchatka #1)</name>
    <name type="common">Sulfolobus islandicus</name>
    <dbReference type="NCBI Taxonomy" id="427317"/>
    <lineage>
        <taxon>Archaea</taxon>
        <taxon>Thermoproteota</taxon>
        <taxon>Thermoprotei</taxon>
        <taxon>Sulfolobales</taxon>
        <taxon>Sulfolobaceae</taxon>
        <taxon>Saccharolobus</taxon>
    </lineage>
</organism>
<feature type="chain" id="PRO_1000202521" description="Imidazoleglycerol-phosphate dehydratase">
    <location>
        <begin position="1"/>
        <end position="193"/>
    </location>
</feature>
<protein>
    <recommendedName>
        <fullName evidence="1">Imidazoleglycerol-phosphate dehydratase</fullName>
        <shortName evidence="1">IGPD</shortName>
        <ecNumber evidence="1">4.2.1.19</ecNumber>
    </recommendedName>
</protein>
<reference key="1">
    <citation type="journal article" date="2009" name="Proc. Natl. Acad. Sci. U.S.A.">
        <title>Biogeography of the Sulfolobus islandicus pan-genome.</title>
        <authorList>
            <person name="Reno M.L."/>
            <person name="Held N.L."/>
            <person name="Fields C.J."/>
            <person name="Burke P.V."/>
            <person name="Whitaker R.J."/>
        </authorList>
    </citation>
    <scope>NUCLEOTIDE SEQUENCE [LARGE SCALE GENOMIC DNA]</scope>
    <source>
        <strain>M.14.25 / Kamchatka #1</strain>
    </source>
</reference>
<keyword id="KW-0028">Amino-acid biosynthesis</keyword>
<keyword id="KW-0963">Cytoplasm</keyword>
<keyword id="KW-0368">Histidine biosynthesis</keyword>
<keyword id="KW-0456">Lyase</keyword>
<proteinExistence type="inferred from homology"/>
<accession>C3MW64</accession>
<evidence type="ECO:0000255" key="1">
    <source>
        <dbReference type="HAMAP-Rule" id="MF_00076"/>
    </source>
</evidence>